<protein>
    <recommendedName>
        <fullName>Uncharacterized protein YczI</fullName>
    </recommendedName>
</protein>
<dbReference type="EMBL" id="D38161">
    <property type="protein sequence ID" value="BAA07364.1"/>
    <property type="status" value="ALT_FRAME"/>
    <property type="molecule type" value="Genomic_DNA"/>
</dbReference>
<dbReference type="EMBL" id="D50453">
    <property type="protein sequence ID" value="BAA09042.1"/>
    <property type="status" value="ALT_FRAME"/>
    <property type="molecule type" value="Genomic_DNA"/>
</dbReference>
<dbReference type="EMBL" id="AL009126">
    <property type="protein sequence ID" value="CAB12219.1"/>
    <property type="molecule type" value="Genomic_DNA"/>
</dbReference>
<dbReference type="PIR" id="G69767">
    <property type="entry name" value="G69767"/>
</dbReference>
<dbReference type="RefSeq" id="NP_388293.1">
    <property type="nucleotide sequence ID" value="NC_000964.3"/>
</dbReference>
<dbReference type="RefSeq" id="WP_003240256.1">
    <property type="nucleotide sequence ID" value="NZ_OZ025638.1"/>
</dbReference>
<dbReference type="FunCoup" id="P42970">
    <property type="interactions" value="2"/>
</dbReference>
<dbReference type="IntAct" id="P42970">
    <property type="interactions" value="10"/>
</dbReference>
<dbReference type="PaxDb" id="224308-BSU04120"/>
<dbReference type="EnsemblBacteria" id="CAB12219">
    <property type="protein sequence ID" value="CAB12219"/>
    <property type="gene ID" value="BSU_04120"/>
</dbReference>
<dbReference type="GeneID" id="939989"/>
<dbReference type="KEGG" id="bsu:BSU04120"/>
<dbReference type="PATRIC" id="fig|224308.179.peg.438"/>
<dbReference type="InParanoid" id="P42970"/>
<dbReference type="OrthoDB" id="2935652at2"/>
<dbReference type="BioCyc" id="BSUB:BSU04120-MONOMER"/>
<dbReference type="Proteomes" id="UP000001570">
    <property type="component" value="Chromosome"/>
</dbReference>
<dbReference type="GO" id="GO:0005886">
    <property type="term" value="C:plasma membrane"/>
    <property type="evidence" value="ECO:0007669"/>
    <property type="project" value="UniProtKB-SubCell"/>
</dbReference>
<dbReference type="InterPro" id="IPR025018">
    <property type="entry name" value="DUF3953"/>
</dbReference>
<dbReference type="Pfam" id="PF13129">
    <property type="entry name" value="DUF3953"/>
    <property type="match status" value="1"/>
</dbReference>
<name>YCZI_BACSU</name>
<accession>P42970</accession>
<accession>O31483</accession>
<feature type="chain" id="PRO_0000049482" description="Uncharacterized protein YczI">
    <location>
        <begin position="1"/>
        <end position="81"/>
    </location>
</feature>
<feature type="transmembrane region" description="Helical" evidence="1">
    <location>
        <begin position="4"/>
        <end position="24"/>
    </location>
</feature>
<feature type="transmembrane region" description="Helical" evidence="1">
    <location>
        <begin position="61"/>
        <end position="81"/>
    </location>
</feature>
<evidence type="ECO:0000255" key="1"/>
<evidence type="ECO:0000305" key="2"/>
<organism>
    <name type="scientific">Bacillus subtilis (strain 168)</name>
    <dbReference type="NCBI Taxonomy" id="224308"/>
    <lineage>
        <taxon>Bacteria</taxon>
        <taxon>Bacillati</taxon>
        <taxon>Bacillota</taxon>
        <taxon>Bacilli</taxon>
        <taxon>Bacillales</taxon>
        <taxon>Bacillaceae</taxon>
        <taxon>Bacillus</taxon>
    </lineage>
</organism>
<keyword id="KW-1003">Cell membrane</keyword>
<keyword id="KW-0472">Membrane</keyword>
<keyword id="KW-1185">Reference proteome</keyword>
<keyword id="KW-0812">Transmembrane</keyword>
<keyword id="KW-1133">Transmembrane helix</keyword>
<sequence length="81" mass="9181">MFRIFKMSFAVIIIILALIAFNYTEHTSVIQSVMLVFLGAVMFMQGLEERKKENDGSGAFNIYTAVFVWSVSLIGFTLHII</sequence>
<comment type="subcellular location">
    <subcellularLocation>
        <location evidence="2">Cell membrane</location>
        <topology evidence="2">Multi-pass membrane protein</topology>
    </subcellularLocation>
</comment>
<comment type="sequence caution" evidence="2">
    <conflict type="frameshift">
        <sequence resource="EMBL-CDS" id="BAA07364"/>
    </conflict>
</comment>
<comment type="sequence caution" evidence="2">
    <conflict type="frameshift">
        <sequence resource="EMBL-CDS" id="BAA09042"/>
    </conflict>
</comment>
<gene>
    <name type="primary">yczI</name>
    <name type="ordered locus">BSU04120</name>
</gene>
<proteinExistence type="predicted"/>
<reference key="1">
    <citation type="journal article" date="1995" name="Microbiology">
        <title>Determination of a 17,484 bp nucleotide sequence around the 39 degrees region of the Bacillus subtilis chromosome and similarity analysis of the products of putative ORFs.</title>
        <authorList>
            <person name="Akagawa E."/>
            <person name="Kurita K."/>
            <person name="Sugawara T."/>
            <person name="Nakamura K."/>
            <person name="Kasahara Y."/>
            <person name="Ogasawara N."/>
            <person name="Yamane K."/>
        </authorList>
    </citation>
    <scope>NUCLEOTIDE SEQUENCE [GENOMIC DNA]</scope>
    <source>
        <strain>168</strain>
    </source>
</reference>
<reference key="2">
    <citation type="journal article" date="1996" name="Microbiology">
        <title>The 25 degrees-36 degrees region of the Bacillus subtilis chromosome: determination of the sequence of a 146 kb segment and identification of 113 genes.</title>
        <authorList>
            <person name="Yamane K."/>
            <person name="Kumano M."/>
            <person name="Kurita K."/>
        </authorList>
    </citation>
    <scope>NUCLEOTIDE SEQUENCE [GENOMIC DNA]</scope>
    <source>
        <strain>168</strain>
    </source>
</reference>
<reference key="3">
    <citation type="journal article" date="1997" name="Nature">
        <title>The complete genome sequence of the Gram-positive bacterium Bacillus subtilis.</title>
        <authorList>
            <person name="Kunst F."/>
            <person name="Ogasawara N."/>
            <person name="Moszer I."/>
            <person name="Albertini A.M."/>
            <person name="Alloni G."/>
            <person name="Azevedo V."/>
            <person name="Bertero M.G."/>
            <person name="Bessieres P."/>
            <person name="Bolotin A."/>
            <person name="Borchert S."/>
            <person name="Borriss R."/>
            <person name="Boursier L."/>
            <person name="Brans A."/>
            <person name="Braun M."/>
            <person name="Brignell S.C."/>
            <person name="Bron S."/>
            <person name="Brouillet S."/>
            <person name="Bruschi C.V."/>
            <person name="Caldwell B."/>
            <person name="Capuano V."/>
            <person name="Carter N.M."/>
            <person name="Choi S.-K."/>
            <person name="Codani J.-J."/>
            <person name="Connerton I.F."/>
            <person name="Cummings N.J."/>
            <person name="Daniel R.A."/>
            <person name="Denizot F."/>
            <person name="Devine K.M."/>
            <person name="Duesterhoeft A."/>
            <person name="Ehrlich S.D."/>
            <person name="Emmerson P.T."/>
            <person name="Entian K.-D."/>
            <person name="Errington J."/>
            <person name="Fabret C."/>
            <person name="Ferrari E."/>
            <person name="Foulger D."/>
            <person name="Fritz C."/>
            <person name="Fujita M."/>
            <person name="Fujita Y."/>
            <person name="Fuma S."/>
            <person name="Galizzi A."/>
            <person name="Galleron N."/>
            <person name="Ghim S.-Y."/>
            <person name="Glaser P."/>
            <person name="Goffeau A."/>
            <person name="Golightly E.J."/>
            <person name="Grandi G."/>
            <person name="Guiseppi G."/>
            <person name="Guy B.J."/>
            <person name="Haga K."/>
            <person name="Haiech J."/>
            <person name="Harwood C.R."/>
            <person name="Henaut A."/>
            <person name="Hilbert H."/>
            <person name="Holsappel S."/>
            <person name="Hosono S."/>
            <person name="Hullo M.-F."/>
            <person name="Itaya M."/>
            <person name="Jones L.-M."/>
            <person name="Joris B."/>
            <person name="Karamata D."/>
            <person name="Kasahara Y."/>
            <person name="Klaerr-Blanchard M."/>
            <person name="Klein C."/>
            <person name="Kobayashi Y."/>
            <person name="Koetter P."/>
            <person name="Koningstein G."/>
            <person name="Krogh S."/>
            <person name="Kumano M."/>
            <person name="Kurita K."/>
            <person name="Lapidus A."/>
            <person name="Lardinois S."/>
            <person name="Lauber J."/>
            <person name="Lazarevic V."/>
            <person name="Lee S.-M."/>
            <person name="Levine A."/>
            <person name="Liu H."/>
            <person name="Masuda S."/>
            <person name="Mauel C."/>
            <person name="Medigue C."/>
            <person name="Medina N."/>
            <person name="Mellado R.P."/>
            <person name="Mizuno M."/>
            <person name="Moestl D."/>
            <person name="Nakai S."/>
            <person name="Noback M."/>
            <person name="Noone D."/>
            <person name="O'Reilly M."/>
            <person name="Ogawa K."/>
            <person name="Ogiwara A."/>
            <person name="Oudega B."/>
            <person name="Park S.-H."/>
            <person name="Parro V."/>
            <person name="Pohl T.M."/>
            <person name="Portetelle D."/>
            <person name="Porwollik S."/>
            <person name="Prescott A.M."/>
            <person name="Presecan E."/>
            <person name="Pujic P."/>
            <person name="Purnelle B."/>
            <person name="Rapoport G."/>
            <person name="Rey M."/>
            <person name="Reynolds S."/>
            <person name="Rieger M."/>
            <person name="Rivolta C."/>
            <person name="Rocha E."/>
            <person name="Roche B."/>
            <person name="Rose M."/>
            <person name="Sadaie Y."/>
            <person name="Sato T."/>
            <person name="Scanlan E."/>
            <person name="Schleich S."/>
            <person name="Schroeter R."/>
            <person name="Scoffone F."/>
            <person name="Sekiguchi J."/>
            <person name="Sekowska A."/>
            <person name="Seror S.J."/>
            <person name="Serror P."/>
            <person name="Shin B.-S."/>
            <person name="Soldo B."/>
            <person name="Sorokin A."/>
            <person name="Tacconi E."/>
            <person name="Takagi T."/>
            <person name="Takahashi H."/>
            <person name="Takemaru K."/>
            <person name="Takeuchi M."/>
            <person name="Tamakoshi A."/>
            <person name="Tanaka T."/>
            <person name="Terpstra P."/>
            <person name="Tognoni A."/>
            <person name="Tosato V."/>
            <person name="Uchiyama S."/>
            <person name="Vandenbol M."/>
            <person name="Vannier F."/>
            <person name="Vassarotti A."/>
            <person name="Viari A."/>
            <person name="Wambutt R."/>
            <person name="Wedler E."/>
            <person name="Wedler H."/>
            <person name="Weitzenegger T."/>
            <person name="Winters P."/>
            <person name="Wipat A."/>
            <person name="Yamamoto H."/>
            <person name="Yamane K."/>
            <person name="Yasumoto K."/>
            <person name="Yata K."/>
            <person name="Yoshida K."/>
            <person name="Yoshikawa H.-F."/>
            <person name="Zumstein E."/>
            <person name="Yoshikawa H."/>
            <person name="Danchin A."/>
        </authorList>
    </citation>
    <scope>NUCLEOTIDE SEQUENCE [LARGE SCALE GENOMIC DNA]</scope>
    <source>
        <strain>168</strain>
    </source>
</reference>